<protein>
    <recommendedName>
        <fullName evidence="8">Maintenance of carboxysome distribution protein B</fullName>
        <shortName evidence="8">McdB</shortName>
    </recommendedName>
</protein>
<gene>
    <name evidence="8" type="primary">mcdB</name>
    <name evidence="11" type="synonym">SEN0013</name>
    <name evidence="12" type="ordered locus">Synpcc7942_1834</name>
</gene>
<evidence type="ECO:0000269" key="1">
    <source>
    </source>
</evidence>
<evidence type="ECO:0000269" key="2">
    <source>
    </source>
</evidence>
<evidence type="ECO:0000269" key="3">
    <source>
    </source>
</evidence>
<evidence type="ECO:0000269" key="4">
    <source>
    </source>
</evidence>
<evidence type="ECO:0000269" key="5">
    <source>
    </source>
</evidence>
<evidence type="ECO:0000269" key="6">
    <source>
    </source>
</evidence>
<evidence type="ECO:0000269" key="7">
    <source>
    </source>
</evidence>
<evidence type="ECO:0000303" key="8">
    <source>
    </source>
</evidence>
<evidence type="ECO:0000303" key="9">
    <source>
    </source>
</evidence>
<evidence type="ECO:0000305" key="10">
    <source>
    </source>
</evidence>
<evidence type="ECO:0000312" key="11">
    <source>
        <dbReference type="EMBL" id="AAN46163.1"/>
    </source>
</evidence>
<evidence type="ECO:0000312" key="12">
    <source>
        <dbReference type="EMBL" id="ABB57864.1"/>
    </source>
</evidence>
<accession>Q8GJM6</accession>
<comment type="function">
    <text evidence="2 3 5 6 7">McdA and McdB together mediate carboxysome (Cb) spacing, size, ultrastructure and probably inheritance in the cell (PubMed:30520729, PubMed:34340540, PubMed:34406783). Together they prevent Cb aggregation (PubMed:34340540, PubMed:34406783). McdA is an ATPase that forms dynamic gradients on the nucleoid in response to adapter protein McdB, which associates with carboxysomes (PubMed:30520729, PubMed:34406783). The interplay between McdA gradients on the nucleoid and McdB-bound carboxysomes result in the equal spacing of Cbs along the cell length (PubMed:30520729, PubMed:34406783). McdB may have an additional function in cell divison (PubMed:30520729, PubMed:34340540, PubMed:34406783). Stimulates the ATPase activity of McdA, causing McdA to be released from DNA. Overexpression leads to loss of McdA oscillation and formation of large Cb aggregates which colocalize with McdB, as well as diffuse McdB staining in the cytoplasm (PubMed:30520729). Undergoes liquid-liquid phase separation between pH 6.5-7.5 and at concentrations between 1 uM and 167 uM (PubMed:31899489, PubMed:37668016). Forms polar foci upon overexpression in E.coli (PubMed:30520729, PubMed:31899489, PubMed:34406783, PubMed:37668016).</text>
</comment>
<comment type="function">
    <text evidence="5">Incorrect positioning (aggregation) of carboxysomes results in reduced CO(2) fixation by encapsulated RuBisCO, which leads to slower growth, cell elongation, asymmetric cell division and an increase in RuBisCO levels (PubMed:34340540).</text>
</comment>
<comment type="subunit">
    <text evidence="2 4 6 7 10">Self-associates, interacts with McdA probably via the C-terminus of both proteins (PubMed:30520729, PubMed:34406783). Homohexamerizes (PubMed:33638215, PubMed:37668016). Probably a trimer of dimers (Probable) (PubMed:37668016). Interacts with most of the shell components of the carboxysome (CcmK2, CcmK3, CcmK4, CcmL and CcmO, but not CcmP) via its C-terminus (PubMed:30520729, PubMed:33638215, PubMed:34406783, PubMed:37668016).</text>
</comment>
<comment type="subcellular location">
    <subcellularLocation>
        <location evidence="2 6">Carboxysome</location>
    </subcellularLocation>
    <text evidence="2">In the absence of carboxysomes (a ccmK2LMNO operon deletion) this protein is found diffused in the cytoplasm (PubMed:30520729).</text>
</comment>
<comment type="induction">
    <text evidence="1">Transcription is reproducibly circadian, under control of RpaA (PubMed:24315105).</text>
</comment>
<comment type="domain">
    <text evidence="7">The N-terminus (approximately residues 1-18) is intrinsically disordered, and not necessary for hexamerization; its net positive charge modulates liquid-liquid phase separation (replacing Arg or Lys residues with polar Gln decreases phase separation). The central domain has a stable alpha-helical structure (approximately residues 19-121), dimerizes and drives phase separation. The C-terminal domain (approximately residues 122-152) probably has 2 alpha-helices and is responsible for hexamerization (PubMed:37668016).</text>
</comment>
<comment type="disruption phenotype">
    <text evidence="2">Loss of McdA oscillation, carboxysomes (Cb) have much larger size variation and cluster, forming irregularly-shaped foci mostly near the poles, with smaller foci elsewhere (Cbs are usually regularly spaced along the central axis of the cell) (PubMed:30520729). Double mcdA-mcdB deletions have a similar phenotype (32 degrees Celsis, 80 umol photon m(-2) sec(-1) constant light, 2% CO(2)) (PubMed:30520729). At 20, 30 or 40 degrees Celsius (60 umol photon m(-2) sec(-1) constant light, 2% CO(2)) Cbs lose regular spacing and instead form large aggregates, increased level of RuBisCO at 20 and 30 degrees. In mcdB deletions cell division is asymmetric at all 3 temperatures. Slower growth at high CO(2) but not in ambient air at 30 or 40 degrees Celsius, slower growth in high CO(2) or ambient air at 20 degrees Celsius (PubMed:34340540). This strain was isolated from freshwater that varies from 8 to 25 degrees Celsius annually.</text>
</comment>
<comment type="miscellaneous">
    <text evidence="9">A type 1 McdB protein.</text>
</comment>
<organism>
    <name type="scientific">Synechococcus elongatus (strain ATCC 33912 / PCC 7942 / FACHB-805)</name>
    <name type="common">Anacystis nidulans R2</name>
    <dbReference type="NCBI Taxonomy" id="1140"/>
    <lineage>
        <taxon>Bacteria</taxon>
        <taxon>Bacillati</taxon>
        <taxon>Cyanobacteriota</taxon>
        <taxon>Cyanophyceae</taxon>
        <taxon>Synechococcales</taxon>
        <taxon>Synechococcaceae</taxon>
        <taxon>Synechococcus</taxon>
    </lineage>
</organism>
<reference evidence="11" key="1">
    <citation type="submission" date="2002-10" db="EMBL/GenBank/DDBJ databases">
        <title>Synechococcus elongatus PCC7942 cosmid 4G8.</title>
        <authorList>
            <person name="Holtman C.K."/>
            <person name="Sandoval P."/>
            <person name="Chen Y."/>
            <person name="Socias T."/>
            <person name="McMurtry S."/>
            <person name="Gonzalez A."/>
            <person name="Salinas I."/>
            <person name="Golden S.S."/>
            <person name="Youderian P."/>
        </authorList>
    </citation>
    <scope>NUCLEOTIDE SEQUENCE [GENOMIC DNA]</scope>
    <source>
        <strain>ATCC 33912 / PCC 7942 / FACHB-805</strain>
    </source>
</reference>
<reference evidence="12" key="2">
    <citation type="submission" date="2005-08" db="EMBL/GenBank/DDBJ databases">
        <title>Complete sequence of chromosome 1 of Synechococcus elongatus PCC 7942.</title>
        <authorList>
            <consortium name="US DOE Joint Genome Institute"/>
            <person name="Copeland A."/>
            <person name="Lucas S."/>
            <person name="Lapidus A."/>
            <person name="Barry K."/>
            <person name="Detter J.C."/>
            <person name="Glavina T."/>
            <person name="Hammon N."/>
            <person name="Israni S."/>
            <person name="Pitluck S."/>
            <person name="Schmutz J."/>
            <person name="Larimer F."/>
            <person name="Land M."/>
            <person name="Kyrpides N."/>
            <person name="Lykidis A."/>
            <person name="Golden S."/>
            <person name="Richardson P."/>
        </authorList>
    </citation>
    <scope>NUCLEOTIDE SEQUENCE [LARGE SCALE GENOMIC DNA]</scope>
    <source>
        <strain>ATCC 33912 / PCC 7942 / FACHB-805</strain>
    </source>
</reference>
<reference key="3">
    <citation type="journal article" date="2023" name="Elife">
        <title>Dissecting the phase separation and oligomerization activities of the carboxysome positioning protein McdB.</title>
        <authorList>
            <person name="Basalla J.L."/>
            <person name="Mak C.A."/>
            <person name="Byrne J.A."/>
            <person name="Ghalmi M."/>
            <person name="Hoang Y."/>
            <person name="Vecchiarelli A.G."/>
        </authorList>
    </citation>
    <scope>PROTEIN SEQUENCE OF 19-24</scope>
    <scope>FUNCTION</scope>
    <scope>SUBUNIT</scope>
    <scope>DOMAIN</scope>
    <scope>MUTAGENESIS OF 7-ARG--ARG-18; 7-ARG--LYS-10; 11-ARG--ARG-18; 133-GLU--ASP-143; 133-GLU-GLU-134 AND 141-GLU--ASP-143</scope>
    <source>
        <strain>ATCC 33912 / PCC 7942 / FACHB-805</strain>
    </source>
</reference>
<reference key="4">
    <citation type="journal article" date="2013" name="Cell">
        <title>Circadian control of global gene expression by the cyanobacterial master regulator RpaA.</title>
        <authorList>
            <person name="Markson J.S."/>
            <person name="Piechura J.R."/>
            <person name="Puszynska A.M."/>
            <person name="O'Shea E.K."/>
        </authorList>
    </citation>
    <scope>INDUCTION</scope>
    <source>
        <strain>ATCC 33912 / PCC 7942 / FACHB-805 / AMC408</strain>
    </source>
</reference>
<reference key="5">
    <citation type="journal article" date="2018" name="Elife">
        <title>Protein gradients on the nucleoid position the carbon-fixing organelles of cyanobacteria.</title>
        <authorList>
            <person name="MacCready J.S."/>
            <person name="Hakim P."/>
            <person name="Young E.J."/>
            <person name="Hu L."/>
            <person name="Liu J."/>
            <person name="Osteryoung K.W."/>
            <person name="Vecchiarelli A.G."/>
            <person name="Ducat D.C."/>
        </authorList>
    </citation>
    <scope>FUNCTION</scope>
    <scope>SUBUNIT</scope>
    <scope>INTERACTION WITH MCDA</scope>
    <scope>SUBCELLULAR LOCATION</scope>
    <scope>DISRUPTION PHENOTYPE</scope>
    <source>
        <strain>ATCC 33912 / PCC 7942 / FACHB-805</strain>
    </source>
</reference>
<reference key="6">
    <citation type="journal article" date="2020" name="Mol. Biol. Evol.">
        <title>Origin and Evolution of Carboxysome Positioning Systems in Cyanobacteria.</title>
        <authorList>
            <person name="MacCready J.S."/>
            <person name="Basalla J.L."/>
            <person name="Vecchiarelli A.G."/>
        </authorList>
    </citation>
    <scope>CLASSIFICATION</scope>
    <scope>UNDERGOES LIQUID-LIQUID PHASE SEPARATION</scope>
    <source>
        <strain>ATCC 33912 / PCC 7942 / FACHB-805</strain>
    </source>
</reference>
<reference key="7">
    <citation type="journal article" date="2021" name="MBio">
        <title>Carboxysome Mispositioning Alters Growth, Morphology, and Rubisco Level of the Cyanobacterium Synechococcus elongatus PCC 7942.</title>
        <authorList>
            <person name="Rillema R."/>
            <person name="Hoang Y."/>
            <person name="MacCready J.S."/>
            <person name="Vecchiarelli A.G."/>
        </authorList>
    </citation>
    <scope>FUNCTION IN CELL PHYSIOLOGY</scope>
    <source>
        <strain>ATCC 33912 / PCC 7942 / FACHB-805</strain>
    </source>
</reference>
<reference key="8">
    <citation type="journal article" date="2021" name="Mol. Microbiol.">
        <title>The McdAB system positions alpha-carboxysomes in proteobacteria.</title>
        <authorList>
            <person name="MacCready J.S."/>
            <person name="Tran L."/>
            <person name="Basalla J.L."/>
            <person name="Hakim P."/>
            <person name="Vecchiarelli A.G."/>
        </authorList>
    </citation>
    <scope>SUBUNIT</scope>
    <source>
        <strain>ATCC 33912 / PCC 7942 / FACHB-805</strain>
    </source>
</reference>
<reference key="9">
    <citation type="journal article" date="2021" name="Mol. Biol. Cell">
        <title>Dissection of the ATPase active site of McdA reveals the sequential steps essential for carboxysome distribution.</title>
        <authorList>
            <person name="Hakim P."/>
            <person name="Hoang Y."/>
            <person name="Vecchiarelli A.G."/>
        </authorList>
    </citation>
    <scope>FUNCTION</scope>
    <scope>SUBUNIT</scope>
    <scope>INTERACTION WITH MCDA</scope>
    <scope>SUBCELLULAR LOCATION</scope>
    <source>
        <strain>ATCC 33912 / PCC 7942 / FACHB-805</strain>
    </source>
</reference>
<name>MCDB_SYNE7</name>
<sequence length="152" mass="17426">MTDAFDRLKKRSRTPIAREGSLTTGPELSDRPLQLLPREFETFCDRYAVHAGDVIEAALDLVLLDPDLQQRLLQRLRQGNGSDRVWLGTACPRSWQQQLQQQAQDQGLSEADLLQEAIAQRLDLVLGQTTLREEVTLLRQELDQLKRKLHGW</sequence>
<proteinExistence type="evidence at protein level"/>
<keyword id="KW-1283">Bacterial microcompartment</keyword>
<keyword id="KW-0120">Carbon dioxide fixation</keyword>
<keyword id="KW-1282">Carboxysome</keyword>
<keyword id="KW-0903">Direct protein sequencing</keyword>
<keyword id="KW-1185">Reference proteome</keyword>
<dbReference type="EMBL" id="AY157498">
    <property type="protein sequence ID" value="AAN46163.1"/>
    <property type="molecule type" value="Genomic_DNA"/>
</dbReference>
<dbReference type="EMBL" id="CP000100">
    <property type="protein sequence ID" value="ABB57864.1"/>
    <property type="molecule type" value="Genomic_DNA"/>
</dbReference>
<dbReference type="RefSeq" id="WP_011244570.1">
    <property type="nucleotide sequence ID" value="NZ_JACJTX010000001.1"/>
</dbReference>
<dbReference type="STRING" id="1140.Synpcc7942_1834"/>
<dbReference type="PaxDb" id="1140-Synpcc7942_1834"/>
<dbReference type="KEGG" id="syf:Synpcc7942_1834"/>
<dbReference type="HOGENOM" id="CLU_1721437_0_0_3"/>
<dbReference type="BioCyc" id="SYNEL:SYNPCC7942_1834-MONOMER"/>
<dbReference type="CD-CODE" id="42CE018A">
    <property type="entry name" value="McdB condensate"/>
</dbReference>
<dbReference type="Proteomes" id="UP000889800">
    <property type="component" value="Chromosome"/>
</dbReference>
<dbReference type="GO" id="GO:0031470">
    <property type="term" value="C:carboxysome"/>
    <property type="evidence" value="ECO:0007669"/>
    <property type="project" value="UniProtKB-SubCell"/>
</dbReference>
<dbReference type="GO" id="GO:0015977">
    <property type="term" value="P:carbon fixation"/>
    <property type="evidence" value="ECO:0007669"/>
    <property type="project" value="UniProtKB-KW"/>
</dbReference>
<feature type="chain" id="PRO_0000459781" description="Maintenance of carboxysome distribution protein B">
    <location>
        <begin position="1"/>
        <end position="152"/>
    </location>
</feature>
<feature type="mutagenesis site" description="No change in hexamerization, no longer phase separates, probably does not interact with McdA so carboxysomes (Cb) aggregate, still colocalizes with Cbs, decreased cytosoic levels of protein, Cbs have less RuBisCO." evidence="7">
    <original>RLKKRSRTPIAR</original>
    <variation>QLQQQSQTPIAQ</variation>
    <location>
        <begin position="7"/>
        <end position="18"/>
    </location>
</feature>
<feature type="mutagenesis site" description="No longer phase separates." evidence="7">
    <original>RLKK</original>
    <variation>QLQQ</variation>
    <location>
        <begin position="7"/>
        <end position="10"/>
    </location>
</feature>
<feature type="mutagenesis site" description="Protein aggregates instead of phase separating." evidence="7">
    <original>RSRTPIAR</original>
    <variation>ASATPIAA</variation>
    <location>
        <begin position="11"/>
        <end position="18"/>
    </location>
</feature>
<feature type="mutagenesis site" description="No longer phase separates." evidence="7">
    <original>RSRTPIAR</original>
    <variation>QSQTPIAQ</variation>
    <location>
        <begin position="11"/>
        <end position="18"/>
    </location>
</feature>
<feature type="mutagenesis site" description="Dimerizes, does not hexamerize." evidence="7">
    <original>EEVTLLRQELD</original>
    <variation>QQVTLLRQQLQ</variation>
    <location>
        <begin position="133"/>
        <end position="143"/>
    </location>
</feature>
<feature type="mutagenesis site" description="Mixed oligomerization, few hexamers." evidence="7">
    <original>EE</original>
    <variation>QQ</variation>
    <location>
        <begin position="133"/>
        <end position="134"/>
    </location>
</feature>
<feature type="mutagenesis site" description="Protein aggregates instead of phase separating." evidence="7">
    <original>ELD</original>
    <variation>ALA</variation>
    <location>
        <begin position="141"/>
        <end position="143"/>
    </location>
</feature>